<gene>
    <name evidence="1" type="primary">uvrB</name>
    <name type="ordered locus">YPA_1063</name>
</gene>
<dbReference type="EMBL" id="CP000308">
    <property type="protein sequence ID" value="ABG13030.1"/>
    <property type="molecule type" value="Genomic_DNA"/>
</dbReference>
<dbReference type="RefSeq" id="WP_002220186.1">
    <property type="nucleotide sequence ID" value="NC_008150.1"/>
</dbReference>
<dbReference type="SMR" id="Q1C942"/>
<dbReference type="KEGG" id="ypa:YPA_1063"/>
<dbReference type="Proteomes" id="UP000001971">
    <property type="component" value="Chromosome"/>
</dbReference>
<dbReference type="GO" id="GO:0005737">
    <property type="term" value="C:cytoplasm"/>
    <property type="evidence" value="ECO:0007669"/>
    <property type="project" value="UniProtKB-SubCell"/>
</dbReference>
<dbReference type="GO" id="GO:0009380">
    <property type="term" value="C:excinuclease repair complex"/>
    <property type="evidence" value="ECO:0007669"/>
    <property type="project" value="InterPro"/>
</dbReference>
<dbReference type="GO" id="GO:0005524">
    <property type="term" value="F:ATP binding"/>
    <property type="evidence" value="ECO:0007669"/>
    <property type="project" value="UniProtKB-UniRule"/>
</dbReference>
<dbReference type="GO" id="GO:0016887">
    <property type="term" value="F:ATP hydrolysis activity"/>
    <property type="evidence" value="ECO:0007669"/>
    <property type="project" value="InterPro"/>
</dbReference>
<dbReference type="GO" id="GO:0003677">
    <property type="term" value="F:DNA binding"/>
    <property type="evidence" value="ECO:0007669"/>
    <property type="project" value="UniProtKB-UniRule"/>
</dbReference>
<dbReference type="GO" id="GO:0009381">
    <property type="term" value="F:excinuclease ABC activity"/>
    <property type="evidence" value="ECO:0007669"/>
    <property type="project" value="UniProtKB-UniRule"/>
</dbReference>
<dbReference type="GO" id="GO:0004386">
    <property type="term" value="F:helicase activity"/>
    <property type="evidence" value="ECO:0007669"/>
    <property type="project" value="UniProtKB-KW"/>
</dbReference>
<dbReference type="GO" id="GO:0006289">
    <property type="term" value="P:nucleotide-excision repair"/>
    <property type="evidence" value="ECO:0007669"/>
    <property type="project" value="UniProtKB-UniRule"/>
</dbReference>
<dbReference type="GO" id="GO:0009432">
    <property type="term" value="P:SOS response"/>
    <property type="evidence" value="ECO:0007669"/>
    <property type="project" value="UniProtKB-UniRule"/>
</dbReference>
<dbReference type="CDD" id="cd17916">
    <property type="entry name" value="DEXHc_UvrB"/>
    <property type="match status" value="1"/>
</dbReference>
<dbReference type="CDD" id="cd18790">
    <property type="entry name" value="SF2_C_UvrB"/>
    <property type="match status" value="1"/>
</dbReference>
<dbReference type="FunFam" id="3.40.50.300:FF:000257">
    <property type="entry name" value="UvrABC system protein B"/>
    <property type="match status" value="1"/>
</dbReference>
<dbReference type="FunFam" id="3.40.50.300:FF:000401">
    <property type="entry name" value="UvrABC system protein B"/>
    <property type="match status" value="1"/>
</dbReference>
<dbReference type="FunFam" id="3.40.50.300:FF:000477">
    <property type="entry name" value="UvrABC system protein B"/>
    <property type="match status" value="1"/>
</dbReference>
<dbReference type="Gene3D" id="3.40.50.300">
    <property type="entry name" value="P-loop containing nucleotide triphosphate hydrolases"/>
    <property type="match status" value="3"/>
</dbReference>
<dbReference type="Gene3D" id="4.10.860.10">
    <property type="entry name" value="UVR domain"/>
    <property type="match status" value="1"/>
</dbReference>
<dbReference type="HAMAP" id="MF_00204">
    <property type="entry name" value="UvrB"/>
    <property type="match status" value="1"/>
</dbReference>
<dbReference type="InterPro" id="IPR006935">
    <property type="entry name" value="Helicase/UvrB_N"/>
</dbReference>
<dbReference type="InterPro" id="IPR014001">
    <property type="entry name" value="Helicase_ATP-bd"/>
</dbReference>
<dbReference type="InterPro" id="IPR001650">
    <property type="entry name" value="Helicase_C-like"/>
</dbReference>
<dbReference type="InterPro" id="IPR027417">
    <property type="entry name" value="P-loop_NTPase"/>
</dbReference>
<dbReference type="InterPro" id="IPR001943">
    <property type="entry name" value="UVR_dom"/>
</dbReference>
<dbReference type="InterPro" id="IPR036876">
    <property type="entry name" value="UVR_dom_sf"/>
</dbReference>
<dbReference type="InterPro" id="IPR004807">
    <property type="entry name" value="UvrB"/>
</dbReference>
<dbReference type="InterPro" id="IPR041471">
    <property type="entry name" value="UvrB_inter"/>
</dbReference>
<dbReference type="InterPro" id="IPR024759">
    <property type="entry name" value="UvrB_YAD/RRR_dom"/>
</dbReference>
<dbReference type="NCBIfam" id="NF003673">
    <property type="entry name" value="PRK05298.1"/>
    <property type="match status" value="1"/>
</dbReference>
<dbReference type="NCBIfam" id="TIGR00631">
    <property type="entry name" value="uvrb"/>
    <property type="match status" value="1"/>
</dbReference>
<dbReference type="PANTHER" id="PTHR24029">
    <property type="entry name" value="UVRABC SYSTEM PROTEIN B"/>
    <property type="match status" value="1"/>
</dbReference>
<dbReference type="PANTHER" id="PTHR24029:SF0">
    <property type="entry name" value="UVRABC SYSTEM PROTEIN B"/>
    <property type="match status" value="1"/>
</dbReference>
<dbReference type="Pfam" id="PF00271">
    <property type="entry name" value="Helicase_C"/>
    <property type="match status" value="1"/>
</dbReference>
<dbReference type="Pfam" id="PF04851">
    <property type="entry name" value="ResIII"/>
    <property type="match status" value="1"/>
</dbReference>
<dbReference type="Pfam" id="PF02151">
    <property type="entry name" value="UVR"/>
    <property type="match status" value="1"/>
</dbReference>
<dbReference type="Pfam" id="PF12344">
    <property type="entry name" value="UvrB"/>
    <property type="match status" value="1"/>
</dbReference>
<dbReference type="Pfam" id="PF17757">
    <property type="entry name" value="UvrB_inter"/>
    <property type="match status" value="1"/>
</dbReference>
<dbReference type="SMART" id="SM00487">
    <property type="entry name" value="DEXDc"/>
    <property type="match status" value="1"/>
</dbReference>
<dbReference type="SMART" id="SM00490">
    <property type="entry name" value="HELICc"/>
    <property type="match status" value="1"/>
</dbReference>
<dbReference type="SUPFAM" id="SSF46600">
    <property type="entry name" value="C-terminal UvrC-binding domain of UvrB"/>
    <property type="match status" value="1"/>
</dbReference>
<dbReference type="SUPFAM" id="SSF52540">
    <property type="entry name" value="P-loop containing nucleoside triphosphate hydrolases"/>
    <property type="match status" value="2"/>
</dbReference>
<dbReference type="PROSITE" id="PS51192">
    <property type="entry name" value="HELICASE_ATP_BIND_1"/>
    <property type="match status" value="1"/>
</dbReference>
<dbReference type="PROSITE" id="PS51194">
    <property type="entry name" value="HELICASE_CTER"/>
    <property type="match status" value="1"/>
</dbReference>
<dbReference type="PROSITE" id="PS50151">
    <property type="entry name" value="UVR"/>
    <property type="match status" value="1"/>
</dbReference>
<keyword id="KW-0067">ATP-binding</keyword>
<keyword id="KW-0963">Cytoplasm</keyword>
<keyword id="KW-0227">DNA damage</keyword>
<keyword id="KW-0228">DNA excision</keyword>
<keyword id="KW-0234">DNA repair</keyword>
<keyword id="KW-0267">Excision nuclease</keyword>
<keyword id="KW-0347">Helicase</keyword>
<keyword id="KW-0378">Hydrolase</keyword>
<keyword id="KW-0547">Nucleotide-binding</keyword>
<keyword id="KW-0742">SOS response</keyword>
<reference key="1">
    <citation type="journal article" date="2006" name="J. Bacteriol.">
        <title>Complete genome sequence of Yersinia pestis strains Antiqua and Nepal516: evidence of gene reduction in an emerging pathogen.</title>
        <authorList>
            <person name="Chain P.S.G."/>
            <person name="Hu P."/>
            <person name="Malfatti S.A."/>
            <person name="Radnedge L."/>
            <person name="Larimer F."/>
            <person name="Vergez L.M."/>
            <person name="Worsham P."/>
            <person name="Chu M.C."/>
            <person name="Andersen G.L."/>
        </authorList>
    </citation>
    <scope>NUCLEOTIDE SEQUENCE [LARGE SCALE GENOMIC DNA]</scope>
    <source>
        <strain>Antiqua</strain>
    </source>
</reference>
<feature type="chain" id="PRO_1000077945" description="UvrABC system protein B">
    <location>
        <begin position="1"/>
        <end position="671"/>
    </location>
</feature>
<feature type="domain" description="Helicase ATP-binding" evidence="1">
    <location>
        <begin position="26"/>
        <end position="183"/>
    </location>
</feature>
<feature type="domain" description="Helicase C-terminal" evidence="1">
    <location>
        <begin position="431"/>
        <end position="593"/>
    </location>
</feature>
<feature type="domain" description="UVR" evidence="1">
    <location>
        <begin position="631"/>
        <end position="666"/>
    </location>
</feature>
<feature type="short sequence motif" description="Beta-hairpin">
    <location>
        <begin position="92"/>
        <end position="115"/>
    </location>
</feature>
<feature type="binding site" evidence="1">
    <location>
        <begin position="39"/>
        <end position="46"/>
    </location>
    <ligand>
        <name>ATP</name>
        <dbReference type="ChEBI" id="CHEBI:30616"/>
    </ligand>
</feature>
<name>UVRB_YERPA</name>
<evidence type="ECO:0000255" key="1">
    <source>
        <dbReference type="HAMAP-Rule" id="MF_00204"/>
    </source>
</evidence>
<proteinExistence type="inferred from homology"/>
<sequence length="671" mass="76329">MSKSFKLHSVFKPAGDQPEAIRKLEEGLENGLAHQTLLGVTGSGKTFTVANVIADLNRPTMILAPNKTLAAQLYGEMKEFFPDNAVEYFVSYYDYYQPEAYVPSSDTFIEKDASVNEHIEQMRLSATKALLERRDVVVVASVSAIYGLGVPDLYLKMMLHLTRGMIIDQRSILRRLSELQYSRNDQVFQRGTFRVRGEVIDIFPAESDEWALRVELFDEEVERLSIFDPLTGQLQHEVPRFTVYPKTHYVTPRERILQAMEEIKVELAERRQVLLANNKLLEEQRLSQRTQFDLEMMNELGYCSGIENYSRYLSGRGPGEAPPTLFDYLPADGLLIVDESHVTIPQIGGMYKGDRSRKETLVEYGFRLPSALDNRPMRFEEFEALAPQTIYVSATPGKYELEKSGGDIIEQVVRPTGLLDPLIEVRPVATQVDDLLSEIRIRAAINERVLVTTLTKRMAEDLTDYLSEHGAKVRYLHSDIDTVERVEIIRDLRLGEFDVLVGINLLREGLDMPEVSLVAILDADKEGFLRSERSLIQTIGRAARNLNGKAILYGDRITASMEKAIGETERRRAKQQAYNEERRIIPQGLNKKIGDILQLGQPSMRGKGKGRGSHKMADTTQYQSLSPKALDQKIRELEAKMYTYAQNLEFEQAAELRDQVHQLRQQFIAIS</sequence>
<protein>
    <recommendedName>
        <fullName evidence="1">UvrABC system protein B</fullName>
        <shortName evidence="1">Protein UvrB</shortName>
    </recommendedName>
    <alternativeName>
        <fullName evidence="1">Excinuclease ABC subunit B</fullName>
    </alternativeName>
</protein>
<organism>
    <name type="scientific">Yersinia pestis bv. Antiqua (strain Antiqua)</name>
    <dbReference type="NCBI Taxonomy" id="360102"/>
    <lineage>
        <taxon>Bacteria</taxon>
        <taxon>Pseudomonadati</taxon>
        <taxon>Pseudomonadota</taxon>
        <taxon>Gammaproteobacteria</taxon>
        <taxon>Enterobacterales</taxon>
        <taxon>Yersiniaceae</taxon>
        <taxon>Yersinia</taxon>
    </lineage>
</organism>
<accession>Q1C942</accession>
<comment type="function">
    <text evidence="1">The UvrABC repair system catalyzes the recognition and processing of DNA lesions. A damage recognition complex composed of 2 UvrA and 2 UvrB subunits scans DNA for abnormalities. Upon binding of the UvrA(2)B(2) complex to a putative damaged site, the DNA wraps around one UvrB monomer. DNA wrap is dependent on ATP binding by UvrB and probably causes local melting of the DNA helix, facilitating insertion of UvrB beta-hairpin between the DNA strands. Then UvrB probes one DNA strand for the presence of a lesion. If a lesion is found the UvrA subunits dissociate and the UvrB-DNA preincision complex is formed. This complex is subsequently bound by UvrC and the second UvrB is released. If no lesion is found, the DNA wraps around the other UvrB subunit that will check the other stand for damage.</text>
</comment>
<comment type="subunit">
    <text evidence="1">Forms a heterotetramer with UvrA during the search for lesions. Interacts with UvrC in an incision complex.</text>
</comment>
<comment type="subcellular location">
    <subcellularLocation>
        <location evidence="1">Cytoplasm</location>
    </subcellularLocation>
</comment>
<comment type="domain">
    <text evidence="1">The beta-hairpin motif is involved in DNA binding.</text>
</comment>
<comment type="similarity">
    <text evidence="1">Belongs to the UvrB family.</text>
</comment>